<gene>
    <name evidence="1" type="primary">dnaA2</name>
    <name type="ordered locus">CT_275</name>
</gene>
<reference key="1">
    <citation type="journal article" date="1998" name="Science">
        <title>Genome sequence of an obligate intracellular pathogen of humans: Chlamydia trachomatis.</title>
        <authorList>
            <person name="Stephens R.S."/>
            <person name="Kalman S."/>
            <person name="Lammel C.J."/>
            <person name="Fan J."/>
            <person name="Marathe R."/>
            <person name="Aravind L."/>
            <person name="Mitchell W.P."/>
            <person name="Olinger L."/>
            <person name="Tatusov R.L."/>
            <person name="Zhao Q."/>
            <person name="Koonin E.V."/>
            <person name="Davis R.W."/>
        </authorList>
    </citation>
    <scope>NUCLEOTIDE SEQUENCE [LARGE SCALE GENOMIC DNA]</scope>
    <source>
        <strain>ATCC VR-885 / DSM 19411 / UW-3/Cx</strain>
    </source>
</reference>
<reference key="2">
    <citation type="journal article" date="2001" name="Mol. Microbiol.">
        <title>Expression of Chlamydia trachomatis genes encoding products required for DNA synthesis and cell division during active versus persistent infection.</title>
        <authorList>
            <person name="Gerard H.C."/>
            <person name="Krausse-Opatz B."/>
            <person name="Wang Z."/>
            <person name="Rudy D."/>
            <person name="Rao J.P."/>
            <person name="Zeidler H."/>
            <person name="Schumacher H.R."/>
            <person name="Whittum-Hudson J.A."/>
            <person name="Koehler L."/>
            <person name="Hudson A.P."/>
        </authorList>
    </citation>
    <scope>INDUCTION</scope>
    <source>
        <strain>Serovar K</strain>
    </source>
</reference>
<dbReference type="EMBL" id="AE001273">
    <property type="protein sequence ID" value="AAC67868.1"/>
    <property type="molecule type" value="Genomic_DNA"/>
</dbReference>
<dbReference type="PIR" id="H71534">
    <property type="entry name" value="H71534"/>
</dbReference>
<dbReference type="SMR" id="O84277"/>
<dbReference type="FunCoup" id="O84277">
    <property type="interactions" value="178"/>
</dbReference>
<dbReference type="STRING" id="272561.CT_275"/>
<dbReference type="EnsemblBacteria" id="AAC67868">
    <property type="protein sequence ID" value="AAC67868"/>
    <property type="gene ID" value="CT_275"/>
</dbReference>
<dbReference type="KEGG" id="ctr:CT_275"/>
<dbReference type="PATRIC" id="fig|272561.5.peg.294"/>
<dbReference type="HOGENOM" id="CLU_026910_3_2_0"/>
<dbReference type="InParanoid" id="O84277"/>
<dbReference type="OrthoDB" id="9807019at2"/>
<dbReference type="Proteomes" id="UP000000431">
    <property type="component" value="Chromosome"/>
</dbReference>
<dbReference type="GO" id="GO:0005737">
    <property type="term" value="C:cytoplasm"/>
    <property type="evidence" value="ECO:0007669"/>
    <property type="project" value="UniProtKB-SubCell"/>
</dbReference>
<dbReference type="GO" id="GO:0005886">
    <property type="term" value="C:plasma membrane"/>
    <property type="evidence" value="ECO:0000318"/>
    <property type="project" value="GO_Central"/>
</dbReference>
<dbReference type="GO" id="GO:0005524">
    <property type="term" value="F:ATP binding"/>
    <property type="evidence" value="ECO:0007669"/>
    <property type="project" value="UniProtKB-UniRule"/>
</dbReference>
<dbReference type="GO" id="GO:0016887">
    <property type="term" value="F:ATP hydrolysis activity"/>
    <property type="evidence" value="ECO:0007669"/>
    <property type="project" value="InterPro"/>
</dbReference>
<dbReference type="GO" id="GO:0003688">
    <property type="term" value="F:DNA replication origin binding"/>
    <property type="evidence" value="ECO:0000318"/>
    <property type="project" value="GO_Central"/>
</dbReference>
<dbReference type="GO" id="GO:0008289">
    <property type="term" value="F:lipid binding"/>
    <property type="evidence" value="ECO:0007669"/>
    <property type="project" value="UniProtKB-KW"/>
</dbReference>
<dbReference type="GO" id="GO:0006260">
    <property type="term" value="P:DNA replication"/>
    <property type="evidence" value="ECO:0000318"/>
    <property type="project" value="GO_Central"/>
</dbReference>
<dbReference type="GO" id="GO:0006270">
    <property type="term" value="P:DNA replication initiation"/>
    <property type="evidence" value="ECO:0000318"/>
    <property type="project" value="GO_Central"/>
</dbReference>
<dbReference type="GO" id="GO:0006275">
    <property type="term" value="P:regulation of DNA replication"/>
    <property type="evidence" value="ECO:0007669"/>
    <property type="project" value="UniProtKB-UniRule"/>
</dbReference>
<dbReference type="CDD" id="cd00009">
    <property type="entry name" value="AAA"/>
    <property type="match status" value="1"/>
</dbReference>
<dbReference type="CDD" id="cd06571">
    <property type="entry name" value="Bac_DnaA_C"/>
    <property type="match status" value="1"/>
</dbReference>
<dbReference type="FunFam" id="1.10.8.60:FF:000003">
    <property type="entry name" value="Chromosomal replication initiator protein DnaA"/>
    <property type="match status" value="1"/>
</dbReference>
<dbReference type="FunFam" id="3.40.50.300:FF:000668">
    <property type="entry name" value="Chromosomal replication initiator protein DnaA"/>
    <property type="match status" value="1"/>
</dbReference>
<dbReference type="Gene3D" id="1.10.1750.10">
    <property type="match status" value="1"/>
</dbReference>
<dbReference type="Gene3D" id="1.10.8.60">
    <property type="match status" value="1"/>
</dbReference>
<dbReference type="Gene3D" id="3.30.300.180">
    <property type="match status" value="1"/>
</dbReference>
<dbReference type="Gene3D" id="3.40.50.300">
    <property type="entry name" value="P-loop containing nucleotide triphosphate hydrolases"/>
    <property type="match status" value="1"/>
</dbReference>
<dbReference type="HAMAP" id="MF_00377">
    <property type="entry name" value="DnaA_bact"/>
    <property type="match status" value="1"/>
</dbReference>
<dbReference type="InterPro" id="IPR003593">
    <property type="entry name" value="AAA+_ATPase"/>
</dbReference>
<dbReference type="InterPro" id="IPR001957">
    <property type="entry name" value="Chromosome_initiator_DnaA"/>
</dbReference>
<dbReference type="InterPro" id="IPR020591">
    <property type="entry name" value="Chromosome_initiator_DnaA-like"/>
</dbReference>
<dbReference type="InterPro" id="IPR018312">
    <property type="entry name" value="Chromosome_initiator_DnaA_CS"/>
</dbReference>
<dbReference type="InterPro" id="IPR013159">
    <property type="entry name" value="DnaA_C"/>
</dbReference>
<dbReference type="InterPro" id="IPR013317">
    <property type="entry name" value="DnaA_dom"/>
</dbReference>
<dbReference type="InterPro" id="IPR024633">
    <property type="entry name" value="DnaA_N_dom"/>
</dbReference>
<dbReference type="InterPro" id="IPR038454">
    <property type="entry name" value="DnaA_N_sf"/>
</dbReference>
<dbReference type="InterPro" id="IPR055199">
    <property type="entry name" value="Hda_lid"/>
</dbReference>
<dbReference type="InterPro" id="IPR027417">
    <property type="entry name" value="P-loop_NTPase"/>
</dbReference>
<dbReference type="InterPro" id="IPR010921">
    <property type="entry name" value="Trp_repressor/repl_initiator"/>
</dbReference>
<dbReference type="NCBIfam" id="TIGR00362">
    <property type="entry name" value="DnaA"/>
    <property type="match status" value="1"/>
</dbReference>
<dbReference type="PANTHER" id="PTHR30050">
    <property type="entry name" value="CHROMOSOMAL REPLICATION INITIATOR PROTEIN DNAA"/>
    <property type="match status" value="1"/>
</dbReference>
<dbReference type="PANTHER" id="PTHR30050:SF2">
    <property type="entry name" value="CHROMOSOMAL REPLICATION INITIATOR PROTEIN DNAA"/>
    <property type="match status" value="1"/>
</dbReference>
<dbReference type="Pfam" id="PF00308">
    <property type="entry name" value="Bac_DnaA"/>
    <property type="match status" value="1"/>
</dbReference>
<dbReference type="Pfam" id="PF08299">
    <property type="entry name" value="Bac_DnaA_C"/>
    <property type="match status" value="1"/>
</dbReference>
<dbReference type="Pfam" id="PF11638">
    <property type="entry name" value="DnaA_N"/>
    <property type="match status" value="1"/>
</dbReference>
<dbReference type="Pfam" id="PF22688">
    <property type="entry name" value="Hda_lid"/>
    <property type="match status" value="1"/>
</dbReference>
<dbReference type="PRINTS" id="PR00051">
    <property type="entry name" value="DNAA"/>
</dbReference>
<dbReference type="SMART" id="SM00382">
    <property type="entry name" value="AAA"/>
    <property type="match status" value="1"/>
</dbReference>
<dbReference type="SMART" id="SM00760">
    <property type="entry name" value="Bac_DnaA_C"/>
    <property type="match status" value="1"/>
</dbReference>
<dbReference type="SUPFAM" id="SSF52540">
    <property type="entry name" value="P-loop containing nucleoside triphosphate hydrolases"/>
    <property type="match status" value="1"/>
</dbReference>
<dbReference type="SUPFAM" id="SSF48295">
    <property type="entry name" value="TrpR-like"/>
    <property type="match status" value="1"/>
</dbReference>
<dbReference type="PROSITE" id="PS01008">
    <property type="entry name" value="DNAA"/>
    <property type="match status" value="1"/>
</dbReference>
<evidence type="ECO:0000255" key="1">
    <source>
        <dbReference type="HAMAP-Rule" id="MF_00377"/>
    </source>
</evidence>
<evidence type="ECO:0000269" key="2">
    <source>
    </source>
</evidence>
<evidence type="ECO:0000305" key="3"/>
<feature type="chain" id="PRO_0000114163" description="Chromosomal replication initiator protein DnaA 2">
    <location>
        <begin position="1"/>
        <end position="455"/>
    </location>
</feature>
<feature type="region of interest" description="Domain I, interacts with DnaA modulators" evidence="1">
    <location>
        <begin position="1"/>
        <end position="95"/>
    </location>
</feature>
<feature type="region of interest" description="Domain II" evidence="1">
    <location>
        <begin position="96"/>
        <end position="112"/>
    </location>
</feature>
<feature type="region of interest" description="Domain III, AAA+ region" evidence="1">
    <location>
        <begin position="113"/>
        <end position="328"/>
    </location>
</feature>
<feature type="region of interest" description="Domain IV, binds dsDNA" evidence="1">
    <location>
        <begin position="329"/>
        <end position="455"/>
    </location>
</feature>
<feature type="binding site" evidence="1">
    <location>
        <position position="157"/>
    </location>
    <ligand>
        <name>ATP</name>
        <dbReference type="ChEBI" id="CHEBI:30616"/>
    </ligand>
</feature>
<feature type="binding site" evidence="1">
    <location>
        <position position="159"/>
    </location>
    <ligand>
        <name>ATP</name>
        <dbReference type="ChEBI" id="CHEBI:30616"/>
    </ligand>
</feature>
<feature type="binding site" evidence="1">
    <location>
        <position position="160"/>
    </location>
    <ligand>
        <name>ATP</name>
        <dbReference type="ChEBI" id="CHEBI:30616"/>
    </ligand>
</feature>
<feature type="binding site" evidence="1">
    <location>
        <position position="161"/>
    </location>
    <ligand>
        <name>ATP</name>
        <dbReference type="ChEBI" id="CHEBI:30616"/>
    </ligand>
</feature>
<protein>
    <recommendedName>
        <fullName evidence="1">Chromosomal replication initiator protein DnaA 2</fullName>
    </recommendedName>
</protein>
<name>DNAA2_CHLTR</name>
<accession>O84277</accession>
<proteinExistence type="evidence at transcript level"/>
<organism>
    <name type="scientific">Chlamydia trachomatis serovar D (strain ATCC VR-885 / DSM 19411 / UW-3/Cx)</name>
    <dbReference type="NCBI Taxonomy" id="272561"/>
    <lineage>
        <taxon>Bacteria</taxon>
        <taxon>Pseudomonadati</taxon>
        <taxon>Chlamydiota</taxon>
        <taxon>Chlamydiia</taxon>
        <taxon>Chlamydiales</taxon>
        <taxon>Chlamydiaceae</taxon>
        <taxon>Chlamydia/Chlamydophila group</taxon>
        <taxon>Chlamydia</taxon>
    </lineage>
</organism>
<comment type="function">
    <text evidence="1">Plays an essential role in the initiation and regulation of chromosomal replication. ATP-DnaA binds to the origin of replication (oriC) to initiate formation of the DNA replication initiation complex once per cell cycle. Binds the DnaA box (a 9 base pair repeat at the origin) and separates the double-stranded (ds)DNA. Forms a right-handed helical filament on oriC DNA; dsDNA binds to the exterior of the filament while single-stranded (ss)DNA is stabiized in the filament's interior. The ATP-DnaA-oriC complex binds and stabilizes one strand of the AT-rich DNA unwinding element (DUE), permitting loading of DNA polymerase. After initiation quickly degrades to an ADP-DnaA complex that is not apt for DNA replication. Binds acidic phospholipids.</text>
</comment>
<comment type="subunit">
    <text evidence="1">Oligomerizes as a right-handed, spiral filament on DNA at oriC.</text>
</comment>
<comment type="subcellular location">
    <subcellularLocation>
        <location evidence="1">Cytoplasm</location>
    </subcellularLocation>
</comment>
<comment type="induction">
    <text evidence="2">In infected human Hep-2 cells, transcripts are visible from 11-48 hours post-infection.</text>
</comment>
<comment type="domain">
    <text evidence="1">Domain I is involved in oligomerization and binding regulators, domain II is flexibile and of varying length in different bacteria, domain III forms the AAA+ region, while domain IV binds dsDNA.</text>
</comment>
<comment type="similarity">
    <text evidence="1 3">Belongs to the DnaA family.</text>
</comment>
<sequence length="455" mass="51330">MLTCNDCSTWEQFVNYIKTRCSKTAFENWIAPIQVLEESSEKIRLEIPNIFVQSYLLDNYKKDLCSFVPLDAEGNPALEFVVAEIKRSSPLVTPSIAKPATEVSEENKDFQLKLNGAYRFDNFIEGPSNQFVKSAALGIAARPGRSYNPLFIHGGVGLGKTHLLHAVGHYVREHHKNLRIHCITTEAFINDLVHHLRVKSIDKMKNFYRSLDLLLVDDIQFLQNRQNFEEEFCNTFETLIHLSKQIVVTSDKPPGQLKLSERIIARMEWGLVAHVGVPDLETRVAILQHKAEQKGLNIPNEIAFYIADHVYGNVRQLEGAINKLTAYCLLFNKPLTETTVRDTLKELFRAPSKQKVSVESILKSVATVFQVKIQDLKGSSRAKNVPLARQVAMYLAKTLITDSLVAIGAAFGKTHSTVLYACKTIEQKIEKDALLKNQISLCKNNIAIDSPQHFV</sequence>
<keyword id="KW-0067">ATP-binding</keyword>
<keyword id="KW-0963">Cytoplasm</keyword>
<keyword id="KW-0235">DNA replication</keyword>
<keyword id="KW-0238">DNA-binding</keyword>
<keyword id="KW-0446">Lipid-binding</keyword>
<keyword id="KW-0547">Nucleotide-binding</keyword>
<keyword id="KW-1185">Reference proteome</keyword>